<proteinExistence type="inferred from homology"/>
<keyword id="KW-0687">Ribonucleoprotein</keyword>
<keyword id="KW-0689">Ribosomal protein</keyword>
<gene>
    <name evidence="1" type="primary">rpmB</name>
    <name type="ordered locus">LBF_0986</name>
</gene>
<feature type="chain" id="PRO_1000121651" description="Large ribosomal subunit protein bL28">
    <location>
        <begin position="1"/>
        <end position="96"/>
    </location>
</feature>
<accession>B0SEH0</accession>
<protein>
    <recommendedName>
        <fullName evidence="1">Large ribosomal subunit protein bL28</fullName>
    </recommendedName>
    <alternativeName>
        <fullName evidence="2">50S ribosomal protein L28</fullName>
    </alternativeName>
</protein>
<dbReference type="EMBL" id="CP000777">
    <property type="protein sequence ID" value="ABZ93513.1"/>
    <property type="molecule type" value="Genomic_DNA"/>
</dbReference>
<dbReference type="RefSeq" id="WP_012388025.1">
    <property type="nucleotide sequence ID" value="NC_010842.1"/>
</dbReference>
<dbReference type="SMR" id="B0SEH0"/>
<dbReference type="KEGG" id="lbf:LBF_0986"/>
<dbReference type="HOGENOM" id="CLU_064548_3_0_12"/>
<dbReference type="GO" id="GO:1990904">
    <property type="term" value="C:ribonucleoprotein complex"/>
    <property type="evidence" value="ECO:0007669"/>
    <property type="project" value="UniProtKB-KW"/>
</dbReference>
<dbReference type="GO" id="GO:0005840">
    <property type="term" value="C:ribosome"/>
    <property type="evidence" value="ECO:0007669"/>
    <property type="project" value="UniProtKB-KW"/>
</dbReference>
<dbReference type="GO" id="GO:0003735">
    <property type="term" value="F:structural constituent of ribosome"/>
    <property type="evidence" value="ECO:0007669"/>
    <property type="project" value="InterPro"/>
</dbReference>
<dbReference type="GO" id="GO:0006412">
    <property type="term" value="P:translation"/>
    <property type="evidence" value="ECO:0007669"/>
    <property type="project" value="UniProtKB-UniRule"/>
</dbReference>
<dbReference type="Gene3D" id="2.30.170.40">
    <property type="entry name" value="Ribosomal protein L28/L24"/>
    <property type="match status" value="1"/>
</dbReference>
<dbReference type="HAMAP" id="MF_00373">
    <property type="entry name" value="Ribosomal_bL28"/>
    <property type="match status" value="1"/>
</dbReference>
<dbReference type="InterPro" id="IPR026569">
    <property type="entry name" value="Ribosomal_bL28"/>
</dbReference>
<dbReference type="InterPro" id="IPR034704">
    <property type="entry name" value="Ribosomal_bL28/bL31-like_sf"/>
</dbReference>
<dbReference type="InterPro" id="IPR001383">
    <property type="entry name" value="Ribosomal_bL28_bact-type"/>
</dbReference>
<dbReference type="InterPro" id="IPR037147">
    <property type="entry name" value="Ribosomal_bL28_sf"/>
</dbReference>
<dbReference type="NCBIfam" id="TIGR00009">
    <property type="entry name" value="L28"/>
    <property type="match status" value="1"/>
</dbReference>
<dbReference type="PANTHER" id="PTHR13528">
    <property type="entry name" value="39S RIBOSOMAL PROTEIN L28, MITOCHONDRIAL"/>
    <property type="match status" value="1"/>
</dbReference>
<dbReference type="PANTHER" id="PTHR13528:SF2">
    <property type="entry name" value="LARGE RIBOSOMAL SUBUNIT PROTEIN BL28M"/>
    <property type="match status" value="1"/>
</dbReference>
<dbReference type="Pfam" id="PF00830">
    <property type="entry name" value="Ribosomal_L28"/>
    <property type="match status" value="1"/>
</dbReference>
<dbReference type="SUPFAM" id="SSF143800">
    <property type="entry name" value="L28p-like"/>
    <property type="match status" value="1"/>
</dbReference>
<name>RL28_LEPBA</name>
<organism>
    <name type="scientific">Leptospira biflexa serovar Patoc (strain Patoc 1 / Ames)</name>
    <dbReference type="NCBI Taxonomy" id="355278"/>
    <lineage>
        <taxon>Bacteria</taxon>
        <taxon>Pseudomonadati</taxon>
        <taxon>Spirochaetota</taxon>
        <taxon>Spirochaetia</taxon>
        <taxon>Leptospirales</taxon>
        <taxon>Leptospiraceae</taxon>
        <taxon>Leptospira</taxon>
    </lineage>
</organism>
<evidence type="ECO:0000255" key="1">
    <source>
        <dbReference type="HAMAP-Rule" id="MF_00373"/>
    </source>
</evidence>
<evidence type="ECO:0000305" key="2"/>
<reference key="1">
    <citation type="journal article" date="2008" name="PLoS ONE">
        <title>Genome sequence of the saprophyte Leptospira biflexa provides insights into the evolution of Leptospira and the pathogenesis of leptospirosis.</title>
        <authorList>
            <person name="Picardeau M."/>
            <person name="Bulach D.M."/>
            <person name="Bouchier C."/>
            <person name="Zuerner R.L."/>
            <person name="Zidane N."/>
            <person name="Wilson P.J."/>
            <person name="Creno S."/>
            <person name="Kuczek E.S."/>
            <person name="Bommezzadri S."/>
            <person name="Davis J.C."/>
            <person name="McGrath A."/>
            <person name="Johnson M.J."/>
            <person name="Boursaux-Eude C."/>
            <person name="Seemann T."/>
            <person name="Rouy Z."/>
            <person name="Coppel R.L."/>
            <person name="Rood J.I."/>
            <person name="Lajus A."/>
            <person name="Davies J.K."/>
            <person name="Medigue C."/>
            <person name="Adler B."/>
        </authorList>
    </citation>
    <scope>NUCLEOTIDE SEQUENCE [LARGE SCALE GENOMIC DNA]</scope>
    <source>
        <strain>Patoc 1 / Ames</strain>
    </source>
</reference>
<sequence>MARTCVVTGKGTTAGNNVSHSHKKNRRIWKVNVITKKIFLEDENRWVRVKISTRALRTLRKKGLKVAIKDHGGDITAITPKKYVGITPKAQPVATA</sequence>
<comment type="similarity">
    <text evidence="1">Belongs to the bacterial ribosomal protein bL28 family.</text>
</comment>